<keyword id="KW-0085">Behavior</keyword>
<keyword id="KW-1003">Cell membrane</keyword>
<keyword id="KW-0966">Cell projection</keyword>
<keyword id="KW-1015">Disulfide bond</keyword>
<keyword id="KW-0297">G-protein coupled receptor</keyword>
<keyword id="KW-0325">Glycoprotein</keyword>
<keyword id="KW-0472">Membrane</keyword>
<keyword id="KW-0675">Receptor</keyword>
<keyword id="KW-1185">Reference proteome</keyword>
<keyword id="KW-0807">Transducer</keyword>
<keyword id="KW-0812">Transmembrane</keyword>
<keyword id="KW-1133">Transmembrane helix</keyword>
<reference key="1">
    <citation type="submission" date="2006-07" db="EMBL/GenBank/DDBJ databases">
        <title>Equus caballus 5-hydroxytryptamine (serotonin) receptor 1A (HTR1A), mRNA.</title>
        <authorList>
            <person name="Momozawa Y."/>
            <person name="Takeuchi Y."/>
            <person name="Mori Y."/>
        </authorList>
    </citation>
    <scope>NUCLEOTIDE SEQUENCE [MRNA]</scope>
</reference>
<name>5HT1A_HORSE</name>
<protein>
    <recommendedName>
        <fullName>5-hydroxytryptamine receptor 1A</fullName>
        <shortName>5-HT-1A</shortName>
        <shortName>5-HT1A</shortName>
    </recommendedName>
    <alternativeName>
        <fullName>Serotonin receptor 1A</fullName>
    </alternativeName>
</protein>
<sequence>MDVLGPGQGNNTTSSEGPFGTRANATGISDVTFSYQVITSLLLGTLIFCAVLGNACVVAAIALERSLQNVANYLIGSLAVTDLMVSVLVLPMAALYQVLNKWTLGQVTCDLFIALDVLCCTSSILHLCAIALDRYWAITDPIDYVNKRTPRRAAALISLTWLVGFLISIPPMLGWRTPEDRSDPDACTISKDHGYTIYSTFGAFYIPLLLMLVLYGRIFRAARFRIRKTVKKVEKKGADSRLGASPAPQRKKSANGELGSREWRQGVENKAGGVLCANGAVRQGDDGAALEVIEVHRMGNSKEHLPLPSEAGAIPCAPAFFEKKNERNAEAKRKMALARERKTVKTLGIIMGTFILCWLPFFIVALVLPFCESSCHMPTLLGAIINWLGYSNSLLNPVIYAYFNKDFQNAFKKILKCKFCRR</sequence>
<proteinExistence type="evidence at transcript level"/>
<dbReference type="EMBL" id="AB264325">
    <property type="protein sequence ID" value="BAF32952.1"/>
    <property type="molecule type" value="mRNA"/>
</dbReference>
<dbReference type="RefSeq" id="NP_001075251.1">
    <property type="nucleotide sequence ID" value="NM_001081782.2"/>
</dbReference>
<dbReference type="SMR" id="Q0EAB6"/>
<dbReference type="FunCoup" id="Q0EAB6">
    <property type="interactions" value="629"/>
</dbReference>
<dbReference type="GlyCosmos" id="Q0EAB6">
    <property type="glycosylation" value="3 sites, No reported glycans"/>
</dbReference>
<dbReference type="Ensembl" id="ENSECAT00000043137.3">
    <property type="protein sequence ID" value="ENSECAP00000061947.1"/>
    <property type="gene ID" value="ENSECAG00000028607.3"/>
</dbReference>
<dbReference type="Ensembl" id="ENSECAT00000081548.1">
    <property type="protein sequence ID" value="ENSECAP00000089503.1"/>
    <property type="gene ID" value="ENSECAG00000028607.3"/>
</dbReference>
<dbReference type="Ensembl" id="ENSECAT00000092970.1">
    <property type="protein sequence ID" value="ENSECAP00000064265.1"/>
    <property type="gene ID" value="ENSECAG00000028607.3"/>
</dbReference>
<dbReference type="Ensembl" id="ENSECAT00000141154.1">
    <property type="protein sequence ID" value="ENSECAP00000083484.1"/>
    <property type="gene ID" value="ENSECAG00000028607.3"/>
</dbReference>
<dbReference type="GeneID" id="100009683"/>
<dbReference type="KEGG" id="ecb:100009683"/>
<dbReference type="CTD" id="3350"/>
<dbReference type="GeneTree" id="ENSGT00940000154484"/>
<dbReference type="InParanoid" id="Q0EAB6"/>
<dbReference type="OrthoDB" id="5955450at2759"/>
<dbReference type="Proteomes" id="UP000002281">
    <property type="component" value="Chromosome 21"/>
</dbReference>
<dbReference type="GO" id="GO:0030425">
    <property type="term" value="C:dendrite"/>
    <property type="evidence" value="ECO:0000318"/>
    <property type="project" value="GO_Central"/>
</dbReference>
<dbReference type="GO" id="GO:0005886">
    <property type="term" value="C:plasma membrane"/>
    <property type="evidence" value="ECO:0000250"/>
    <property type="project" value="UniProtKB"/>
</dbReference>
<dbReference type="GO" id="GO:0045202">
    <property type="term" value="C:synapse"/>
    <property type="evidence" value="ECO:0007669"/>
    <property type="project" value="GOC"/>
</dbReference>
<dbReference type="GO" id="GO:0004993">
    <property type="term" value="F:G protein-coupled serotonin receptor activity"/>
    <property type="evidence" value="ECO:0000250"/>
    <property type="project" value="UniProtKB"/>
</dbReference>
<dbReference type="GO" id="GO:0001586">
    <property type="term" value="F:Gi/o-coupled serotonin receptor activity"/>
    <property type="evidence" value="ECO:0007669"/>
    <property type="project" value="Ensembl"/>
</dbReference>
<dbReference type="GO" id="GO:0030594">
    <property type="term" value="F:neurotransmitter receptor activity"/>
    <property type="evidence" value="ECO:0000318"/>
    <property type="project" value="GO_Central"/>
</dbReference>
<dbReference type="GO" id="GO:0090722">
    <property type="term" value="F:receptor-receptor interaction"/>
    <property type="evidence" value="ECO:0007669"/>
    <property type="project" value="Ensembl"/>
</dbReference>
<dbReference type="GO" id="GO:0051378">
    <property type="term" value="F:serotonin binding"/>
    <property type="evidence" value="ECO:0000318"/>
    <property type="project" value="GO_Central"/>
</dbReference>
<dbReference type="GO" id="GO:0099589">
    <property type="term" value="F:serotonin receptor activity"/>
    <property type="evidence" value="ECO:0007669"/>
    <property type="project" value="Ensembl"/>
</dbReference>
<dbReference type="GO" id="GO:0007198">
    <property type="term" value="P:adenylate cyclase-inhibiting serotonin receptor signaling pathway"/>
    <property type="evidence" value="ECO:0000250"/>
    <property type="project" value="UniProtKB"/>
</dbReference>
<dbReference type="GO" id="GO:0001662">
    <property type="term" value="P:behavioral fear response"/>
    <property type="evidence" value="ECO:0000250"/>
    <property type="project" value="UniProtKB"/>
</dbReference>
<dbReference type="GO" id="GO:0007268">
    <property type="term" value="P:chemical synaptic transmission"/>
    <property type="evidence" value="ECO:0000318"/>
    <property type="project" value="GO_Central"/>
</dbReference>
<dbReference type="GO" id="GO:0035640">
    <property type="term" value="P:exploration behavior"/>
    <property type="evidence" value="ECO:0000250"/>
    <property type="project" value="UniProtKB"/>
</dbReference>
<dbReference type="GO" id="GO:0007187">
    <property type="term" value="P:G protein-coupled receptor signaling pathway, coupled to cyclic nucleotide second messenger"/>
    <property type="evidence" value="ECO:0000318"/>
    <property type="project" value="GO_Central"/>
</dbReference>
<dbReference type="GO" id="GO:0007214">
    <property type="term" value="P:gamma-aminobutyric acid signaling pathway"/>
    <property type="evidence" value="ECO:0007669"/>
    <property type="project" value="Ensembl"/>
</dbReference>
<dbReference type="GO" id="GO:0050795">
    <property type="term" value="P:regulation of behavior"/>
    <property type="evidence" value="ECO:0007669"/>
    <property type="project" value="InterPro"/>
</dbReference>
<dbReference type="GO" id="GO:0042053">
    <property type="term" value="P:regulation of dopamine metabolic process"/>
    <property type="evidence" value="ECO:0000250"/>
    <property type="project" value="UniProtKB"/>
</dbReference>
<dbReference type="GO" id="GO:0046883">
    <property type="term" value="P:regulation of hormone secretion"/>
    <property type="evidence" value="ECO:0007669"/>
    <property type="project" value="InterPro"/>
</dbReference>
<dbReference type="GO" id="GO:0014062">
    <property type="term" value="P:regulation of serotonin secretion"/>
    <property type="evidence" value="ECO:0000250"/>
    <property type="project" value="UniProtKB"/>
</dbReference>
<dbReference type="GO" id="GO:0019229">
    <property type="term" value="P:regulation of vasoconstriction"/>
    <property type="evidence" value="ECO:0007669"/>
    <property type="project" value="InterPro"/>
</dbReference>
<dbReference type="GO" id="GO:0042428">
    <property type="term" value="P:serotonin metabolic process"/>
    <property type="evidence" value="ECO:0000250"/>
    <property type="project" value="UniProtKB"/>
</dbReference>
<dbReference type="GO" id="GO:0007210">
    <property type="term" value="P:serotonin receptor signaling pathway"/>
    <property type="evidence" value="ECO:0000250"/>
    <property type="project" value="UniProtKB"/>
</dbReference>
<dbReference type="CDD" id="cd15330">
    <property type="entry name" value="7tmA_5-HT1A_vertebrates"/>
    <property type="match status" value="1"/>
</dbReference>
<dbReference type="Gene3D" id="1.20.1070.10">
    <property type="entry name" value="Rhodopsin 7-helix transmembrane proteins"/>
    <property type="match status" value="1"/>
</dbReference>
<dbReference type="InterPro" id="IPR000610">
    <property type="entry name" value="5HT1A_rcpt"/>
</dbReference>
<dbReference type="InterPro" id="IPR002231">
    <property type="entry name" value="5HT_rcpt"/>
</dbReference>
<dbReference type="InterPro" id="IPR000276">
    <property type="entry name" value="GPCR_Rhodpsn"/>
</dbReference>
<dbReference type="InterPro" id="IPR017452">
    <property type="entry name" value="GPCR_Rhodpsn_7TM"/>
</dbReference>
<dbReference type="PANTHER" id="PTHR24248:SF191">
    <property type="entry name" value="5-HYDROXYTRYPTAMINE RECEPTOR 1A"/>
    <property type="match status" value="1"/>
</dbReference>
<dbReference type="PANTHER" id="PTHR24248">
    <property type="entry name" value="ADRENERGIC RECEPTOR-RELATED G-PROTEIN COUPLED RECEPTOR"/>
    <property type="match status" value="1"/>
</dbReference>
<dbReference type="Pfam" id="PF00001">
    <property type="entry name" value="7tm_1"/>
    <property type="match status" value="1"/>
</dbReference>
<dbReference type="PRINTS" id="PR00512">
    <property type="entry name" value="5HT1ARECEPTR"/>
</dbReference>
<dbReference type="PRINTS" id="PR01101">
    <property type="entry name" value="5HTRECEPTOR"/>
</dbReference>
<dbReference type="PRINTS" id="PR00237">
    <property type="entry name" value="GPCRRHODOPSN"/>
</dbReference>
<dbReference type="SMART" id="SM01381">
    <property type="entry name" value="7TM_GPCR_Srsx"/>
    <property type="match status" value="1"/>
</dbReference>
<dbReference type="SUPFAM" id="SSF81321">
    <property type="entry name" value="Family A G protein-coupled receptor-like"/>
    <property type="match status" value="1"/>
</dbReference>
<dbReference type="PROSITE" id="PS00237">
    <property type="entry name" value="G_PROTEIN_RECEP_F1_1"/>
    <property type="match status" value="1"/>
</dbReference>
<dbReference type="PROSITE" id="PS50262">
    <property type="entry name" value="G_PROTEIN_RECEP_F1_2"/>
    <property type="match status" value="1"/>
</dbReference>
<accession>Q0EAB6</accession>
<organism>
    <name type="scientific">Equus caballus</name>
    <name type="common">Horse</name>
    <dbReference type="NCBI Taxonomy" id="9796"/>
    <lineage>
        <taxon>Eukaryota</taxon>
        <taxon>Metazoa</taxon>
        <taxon>Chordata</taxon>
        <taxon>Craniata</taxon>
        <taxon>Vertebrata</taxon>
        <taxon>Euteleostomi</taxon>
        <taxon>Mammalia</taxon>
        <taxon>Eutheria</taxon>
        <taxon>Laurasiatheria</taxon>
        <taxon>Perissodactyla</taxon>
        <taxon>Equidae</taxon>
        <taxon>Equus</taxon>
    </lineage>
</organism>
<feature type="chain" id="PRO_0000271442" description="5-hydroxytryptamine receptor 1A">
    <location>
        <begin position="1"/>
        <end position="422"/>
    </location>
</feature>
<feature type="topological domain" description="Extracellular" evidence="1">
    <location>
        <begin position="1"/>
        <end position="38"/>
    </location>
</feature>
<feature type="transmembrane region" description="Helical; Name=1" evidence="1">
    <location>
        <begin position="39"/>
        <end position="59"/>
    </location>
</feature>
<feature type="topological domain" description="Cytoplasmic" evidence="1">
    <location>
        <begin position="60"/>
        <end position="73"/>
    </location>
</feature>
<feature type="transmembrane region" description="Helical; Name=2" evidence="1">
    <location>
        <begin position="74"/>
        <end position="98"/>
    </location>
</feature>
<feature type="topological domain" description="Extracellular" evidence="1">
    <location>
        <begin position="99"/>
        <end position="107"/>
    </location>
</feature>
<feature type="transmembrane region" description="Helical; Name=3" evidence="1">
    <location>
        <begin position="108"/>
        <end position="132"/>
    </location>
</feature>
<feature type="topological domain" description="Cytoplasmic" evidence="1">
    <location>
        <begin position="133"/>
        <end position="152"/>
    </location>
</feature>
<feature type="transmembrane region" description="Helical; Name=4" evidence="1">
    <location>
        <begin position="153"/>
        <end position="174"/>
    </location>
</feature>
<feature type="topological domain" description="Extracellular" evidence="1">
    <location>
        <begin position="175"/>
        <end position="193"/>
    </location>
</feature>
<feature type="transmembrane region" description="Helical; Name=5" evidence="1">
    <location>
        <begin position="194"/>
        <end position="216"/>
    </location>
</feature>
<feature type="topological domain" description="Cytoplasmic" evidence="1">
    <location>
        <begin position="217"/>
        <end position="346"/>
    </location>
</feature>
<feature type="transmembrane region" description="Helical; Name=6" evidence="1">
    <location>
        <begin position="347"/>
        <end position="370"/>
    </location>
</feature>
<feature type="topological domain" description="Extracellular" evidence="1">
    <location>
        <begin position="371"/>
        <end position="378"/>
    </location>
</feature>
<feature type="transmembrane region" description="Helical; Name=7" evidence="1">
    <location>
        <begin position="379"/>
        <end position="403"/>
    </location>
</feature>
<feature type="topological domain" description="Cytoplasmic" evidence="1">
    <location>
        <begin position="404"/>
        <end position="422"/>
    </location>
</feature>
<feature type="region of interest" description="Disordered" evidence="6">
    <location>
        <begin position="237"/>
        <end position="262"/>
    </location>
</feature>
<feature type="short sequence motif" description="DRY motif; important for ligand-induced conformation changes" evidence="3">
    <location>
        <begin position="133"/>
        <end position="135"/>
    </location>
</feature>
<feature type="short sequence motif" description="NPxxY motif; important for ligand-induced conformation changes and signaling" evidence="3">
    <location>
        <begin position="396"/>
        <end position="400"/>
    </location>
</feature>
<feature type="binding site" evidence="1">
    <location>
        <position position="116"/>
    </location>
    <ligand>
        <name>serotonin</name>
        <dbReference type="ChEBI" id="CHEBI:350546"/>
    </ligand>
</feature>
<feature type="binding site" evidence="1">
    <location>
        <position position="120"/>
    </location>
    <ligand>
        <name>serotonin</name>
        <dbReference type="ChEBI" id="CHEBI:350546"/>
    </ligand>
</feature>
<feature type="binding site" evidence="1">
    <location>
        <position position="345"/>
    </location>
    <ligand>
        <name>1D-myo-inositol 4-phosphate</name>
        <dbReference type="ChEBI" id="CHEBI:58469"/>
    </ligand>
</feature>
<feature type="binding site" evidence="1">
    <location>
        <position position="346"/>
    </location>
    <ligand>
        <name>1D-myo-inositol 4-phosphate</name>
        <dbReference type="ChEBI" id="CHEBI:58469"/>
    </ligand>
</feature>
<feature type="binding site" evidence="1">
    <location>
        <position position="352"/>
    </location>
    <ligand>
        <name>1D-myo-inositol 4-phosphate</name>
        <dbReference type="ChEBI" id="CHEBI:58469"/>
    </ligand>
</feature>
<feature type="binding site" evidence="1">
    <location>
        <position position="403"/>
    </location>
    <ligand>
        <name>1D-myo-inositol 4-phosphate</name>
        <dbReference type="ChEBI" id="CHEBI:58469"/>
    </ligand>
</feature>
<feature type="binding site" evidence="1">
    <location>
        <position position="404"/>
    </location>
    <ligand>
        <name>1D-myo-inositol 4-phosphate</name>
        <dbReference type="ChEBI" id="CHEBI:58469"/>
    </ligand>
</feature>
<feature type="binding site" evidence="1">
    <location>
        <position position="405"/>
    </location>
    <ligand>
        <name>1D-myo-inositol 4-phosphate</name>
        <dbReference type="ChEBI" id="CHEBI:58469"/>
    </ligand>
</feature>
<feature type="glycosylation site" description="N-linked (GlcNAc...) asparagine" evidence="4">
    <location>
        <position position="10"/>
    </location>
</feature>
<feature type="glycosylation site" description="N-linked (GlcNAc...) asparagine" evidence="4">
    <location>
        <position position="11"/>
    </location>
</feature>
<feature type="glycosylation site" description="N-linked (GlcNAc...) asparagine" evidence="4">
    <location>
        <position position="24"/>
    </location>
</feature>
<feature type="disulfide bond" evidence="5">
    <location>
        <begin position="109"/>
        <end position="187"/>
    </location>
</feature>
<evidence type="ECO:0000250" key="1">
    <source>
        <dbReference type="UniProtKB" id="P08908"/>
    </source>
</evidence>
<evidence type="ECO:0000250" key="2">
    <source>
        <dbReference type="UniProtKB" id="P19327"/>
    </source>
</evidence>
<evidence type="ECO:0000250" key="3">
    <source>
        <dbReference type="UniProtKB" id="P41595"/>
    </source>
</evidence>
<evidence type="ECO:0000255" key="4"/>
<evidence type="ECO:0000255" key="5">
    <source>
        <dbReference type="PROSITE-ProRule" id="PRU00521"/>
    </source>
</evidence>
<evidence type="ECO:0000256" key="6">
    <source>
        <dbReference type="SAM" id="MobiDB-lite"/>
    </source>
</evidence>
<gene>
    <name type="primary">HTR1A</name>
</gene>
<comment type="function">
    <text evidence="1">G-protein coupled receptor for 5-hydroxytryptamine (serotonin). Also functions as a receptor for various drugs and psychoactive substances. Ligand binding causes a conformation change that triggers signaling via guanine nucleotide-binding proteins (G proteins) and modulates the activity of downstream effectors, such as adenylate cyclase. HTR1A is coupled to G(i)/G(o) G alpha proteins and mediates inhibitory neurotransmission: signaling inhibits adenylate cyclase activity and activates a phosphatidylinositol-calcium second messenger system that regulates the release of Ca(2+) ions from intracellular stores. Beta-arrestin family members regulate signaling by mediating both receptor desensitization and resensitization processes.</text>
</comment>
<comment type="activity regulation">
    <text evidence="1">G-protein coupled receptor activity is regulated by lipids: phosphatidylinositol 4-phosphate increases HTR1A-mediated activity.</text>
</comment>
<comment type="subunit">
    <text evidence="1 2">Heterodimer; heterodimerizes with GPER1 (By similarity). Interacts with YIF1B (By similarity). Interacts with GPR39 and GALR1 (By similarity).</text>
</comment>
<comment type="subcellular location">
    <subcellularLocation>
        <location evidence="1">Cell membrane</location>
        <topology evidence="1">Multi-pass membrane protein</topology>
    </subcellularLocation>
    <subcellularLocation>
        <location evidence="2">Cell projection</location>
        <location evidence="2">Dendrite</location>
    </subcellularLocation>
</comment>
<comment type="similarity">
    <text evidence="5">Belongs to the G-protein coupled receptor 1 family. 5-hydroxytryptamine receptor subfamily. HTR1A sub-subfamily.</text>
</comment>